<organism>
    <name type="scientific">Heliobacterium modesticaldum (strain ATCC 51547 / Ice1)</name>
    <dbReference type="NCBI Taxonomy" id="498761"/>
    <lineage>
        <taxon>Bacteria</taxon>
        <taxon>Bacillati</taxon>
        <taxon>Bacillota</taxon>
        <taxon>Clostridia</taxon>
        <taxon>Eubacteriales</taxon>
        <taxon>Heliobacteriaceae</taxon>
        <taxon>Heliomicrobium</taxon>
    </lineage>
</organism>
<dbReference type="EC" id="4.2.1.33" evidence="1"/>
<dbReference type="EMBL" id="CP000930">
    <property type="protein sequence ID" value="ABZ84089.1"/>
    <property type="molecule type" value="Genomic_DNA"/>
</dbReference>
<dbReference type="RefSeq" id="WP_012282603.1">
    <property type="nucleotide sequence ID" value="NC_010337.2"/>
</dbReference>
<dbReference type="SMR" id="B0TCR3"/>
<dbReference type="STRING" id="498761.HM1_1517"/>
<dbReference type="KEGG" id="hmo:HM1_1517"/>
<dbReference type="eggNOG" id="COG0066">
    <property type="taxonomic scope" value="Bacteria"/>
</dbReference>
<dbReference type="HOGENOM" id="CLU_081378_1_1_9"/>
<dbReference type="UniPathway" id="UPA00048">
    <property type="reaction ID" value="UER00071"/>
</dbReference>
<dbReference type="Proteomes" id="UP000008550">
    <property type="component" value="Chromosome"/>
</dbReference>
<dbReference type="GO" id="GO:0003861">
    <property type="term" value="F:3-isopropylmalate dehydratase activity"/>
    <property type="evidence" value="ECO:0007669"/>
    <property type="project" value="UniProtKB-UniRule"/>
</dbReference>
<dbReference type="GO" id="GO:0009098">
    <property type="term" value="P:L-leucine biosynthetic process"/>
    <property type="evidence" value="ECO:0007669"/>
    <property type="project" value="UniProtKB-UniRule"/>
</dbReference>
<dbReference type="CDD" id="cd01577">
    <property type="entry name" value="IPMI_Swivel"/>
    <property type="match status" value="1"/>
</dbReference>
<dbReference type="FunFam" id="3.20.19.10:FF:000007">
    <property type="entry name" value="Isopropylmalate/citramalate isomerase small subunit"/>
    <property type="match status" value="1"/>
</dbReference>
<dbReference type="Gene3D" id="3.20.19.10">
    <property type="entry name" value="Aconitase, domain 4"/>
    <property type="match status" value="1"/>
</dbReference>
<dbReference type="HAMAP" id="MF_01032">
    <property type="entry name" value="LeuD_type2"/>
    <property type="match status" value="1"/>
</dbReference>
<dbReference type="InterPro" id="IPR015928">
    <property type="entry name" value="Aconitase/3IPM_dehydase_swvl"/>
</dbReference>
<dbReference type="InterPro" id="IPR000573">
    <property type="entry name" value="AconitaseA/IPMdHydase_ssu_swvl"/>
</dbReference>
<dbReference type="InterPro" id="IPR033940">
    <property type="entry name" value="IPMI_Swivel"/>
</dbReference>
<dbReference type="InterPro" id="IPR050075">
    <property type="entry name" value="LeuD"/>
</dbReference>
<dbReference type="InterPro" id="IPR011824">
    <property type="entry name" value="LeuD/DmdB_bac"/>
</dbReference>
<dbReference type="InterPro" id="IPR011827">
    <property type="entry name" value="LeuD_type2/HacB/DmdB"/>
</dbReference>
<dbReference type="NCBIfam" id="TIGR02084">
    <property type="entry name" value="leud"/>
    <property type="match status" value="1"/>
</dbReference>
<dbReference type="NCBIfam" id="TIGR02087">
    <property type="entry name" value="LEUD_arch"/>
    <property type="match status" value="1"/>
</dbReference>
<dbReference type="PANTHER" id="PTHR43345:SF2">
    <property type="entry name" value="3-ISOPROPYLMALATE DEHYDRATASE SMALL SUBUNIT 1"/>
    <property type="match status" value="1"/>
</dbReference>
<dbReference type="PANTHER" id="PTHR43345">
    <property type="entry name" value="3-ISOPROPYLMALATE DEHYDRATASE SMALL SUBUNIT 2-RELATED-RELATED"/>
    <property type="match status" value="1"/>
</dbReference>
<dbReference type="Pfam" id="PF00694">
    <property type="entry name" value="Aconitase_C"/>
    <property type="match status" value="1"/>
</dbReference>
<dbReference type="SUPFAM" id="SSF52016">
    <property type="entry name" value="LeuD/IlvD-like"/>
    <property type="match status" value="1"/>
</dbReference>
<proteinExistence type="inferred from homology"/>
<evidence type="ECO:0000255" key="1">
    <source>
        <dbReference type="HAMAP-Rule" id="MF_01032"/>
    </source>
</evidence>
<name>LEUD_HELMI</name>
<gene>
    <name evidence="1" type="primary">leuD</name>
    <name type="ordered locus">Helmi_14640</name>
    <name type="ORF">HM1_1517</name>
</gene>
<keyword id="KW-0028">Amino-acid biosynthesis</keyword>
<keyword id="KW-0100">Branched-chain amino acid biosynthesis</keyword>
<keyword id="KW-0432">Leucine biosynthesis</keyword>
<keyword id="KW-0456">Lyase</keyword>
<keyword id="KW-1185">Reference proteome</keyword>
<reference key="1">
    <citation type="journal article" date="2008" name="J. Bacteriol.">
        <title>The genome of Heliobacterium modesticaldum, a phototrophic representative of the Firmicutes containing the simplest photosynthetic apparatus.</title>
        <authorList>
            <person name="Sattley W.M."/>
            <person name="Madigan M.T."/>
            <person name="Swingley W.D."/>
            <person name="Cheung P.C."/>
            <person name="Clocksin K.M."/>
            <person name="Conrad A.L."/>
            <person name="Dejesa L.C."/>
            <person name="Honchak B.M."/>
            <person name="Jung D.O."/>
            <person name="Karbach L.E."/>
            <person name="Kurdoglu A."/>
            <person name="Lahiri S."/>
            <person name="Mastrian S.D."/>
            <person name="Page L.E."/>
            <person name="Taylor H.L."/>
            <person name="Wang Z.T."/>
            <person name="Raymond J."/>
            <person name="Chen M."/>
            <person name="Blankenship R.E."/>
            <person name="Touchman J.W."/>
        </authorList>
    </citation>
    <scope>NUCLEOTIDE SEQUENCE [LARGE SCALE GENOMIC DNA]</scope>
    <source>
        <strain>ATCC 51547 / Ice1</strain>
    </source>
</reference>
<feature type="chain" id="PRO_1000135849" description="3-isopropylmalate dehydratase small subunit">
    <location>
        <begin position="1"/>
        <end position="166"/>
    </location>
</feature>
<protein>
    <recommendedName>
        <fullName evidence="1">3-isopropylmalate dehydratase small subunit</fullName>
        <ecNumber evidence="1">4.2.1.33</ecNumber>
    </recommendedName>
    <alternativeName>
        <fullName evidence="1">Alpha-IPM isomerase</fullName>
        <shortName evidence="1">IPMI</shortName>
    </alternativeName>
    <alternativeName>
        <fullName evidence="1">Isopropylmalate isomerase</fullName>
    </alternativeName>
</protein>
<accession>B0TCR3</accession>
<sequence length="166" mass="18052">MEFTGRVWKFGKDIDTDAIIPARYLNTTSPEELAKHCMEDADPSFPQKVRKGDIIVADKNFGCGSSREHAPIAIKAAGVPCVIAKSFARIFFRNAINIGLPIFECPEAVDGIREGDVVQVNADRGVIFNMTTGQTYTAKALPASMQSIIQAGGLMQYVKTRVAEGK</sequence>
<comment type="function">
    <text evidence="1">Catalyzes the isomerization between 2-isopropylmalate and 3-isopropylmalate, via the formation of 2-isopropylmaleate.</text>
</comment>
<comment type="catalytic activity">
    <reaction evidence="1">
        <text>(2R,3S)-3-isopropylmalate = (2S)-2-isopropylmalate</text>
        <dbReference type="Rhea" id="RHEA:32287"/>
        <dbReference type="ChEBI" id="CHEBI:1178"/>
        <dbReference type="ChEBI" id="CHEBI:35121"/>
        <dbReference type="EC" id="4.2.1.33"/>
    </reaction>
</comment>
<comment type="pathway">
    <text evidence="1">Amino-acid biosynthesis; L-leucine biosynthesis; L-leucine from 3-methyl-2-oxobutanoate: step 2/4.</text>
</comment>
<comment type="subunit">
    <text evidence="1">Heterodimer of LeuC and LeuD.</text>
</comment>
<comment type="similarity">
    <text evidence="1">Belongs to the LeuD family. LeuD type 2 subfamily.</text>
</comment>